<keyword id="KW-0025">Alternative splicing</keyword>
<keyword id="KW-0963">Cytoplasm</keyword>
<keyword id="KW-0251">Elongation factor</keyword>
<keyword id="KW-0342">GTP-binding</keyword>
<keyword id="KW-1017">Isopeptide bond</keyword>
<keyword id="KW-0488">Methylation</keyword>
<keyword id="KW-0547">Nucleotide-binding</keyword>
<keyword id="KW-0648">Protein biosynthesis</keyword>
<keyword id="KW-1185">Reference proteome</keyword>
<keyword id="KW-0832">Ubl conjugation</keyword>
<gene>
    <name type="primary">A2</name>
    <name type="ordered locus">At1g07930</name>
    <name type="ORF">T6D22.31</name>
</gene>
<evidence type="ECO:0000250" key="1"/>
<evidence type="ECO:0000250" key="2">
    <source>
        <dbReference type="UniProtKB" id="Q8GTY0"/>
    </source>
</evidence>
<evidence type="ECO:0000269" key="3">
    <source>
    </source>
</evidence>
<evidence type="ECO:0000305" key="4"/>
<sequence length="449" mass="49502">MGKEKFHINIVVIGHVDSGKSTTTGHLIYKLGGIDKRVIERFEKEAAEMNKRSFKYAWVLDKLKAERERGITIDIALWKFETTKYYCTVIDAPGHRDFIKNMITGTSQADCAVLIIDSTTGGFEAGISKDGQTREHALLAFTLGVKQMICCCNKMDATTPKYSKARYDEIIKEVSSYLKKVGYNPDKIPFVPISGFEGDNMIERSTNLDWYKGPTLLEALDQINEPKRPSDKPLRLPLQDVYKIGGIGTVPVGRVETGMIKPGMVVTFAPTGLTTEVKSVEMHHESLLEALPGDNVGFNVKNVAVKDLKRGYVASNSKDDPAKGAANFTSQVIIMNHPGQIGNGYAPVLDCHTSHIAVKFSEILTKIDRRSGKEIEKEPKFLKNGDAGMVKMTPTKPMVVETFSEYPPLGRFAVRDMRQTVAVGVIKSVDKKDPTGAKVTKAAVKKGAK</sequence>
<name>EF1A2_ARATH</name>
<comment type="function">
    <text>This protein promotes the GTP-dependent binding of aminoacyl-tRNA to the A-site of ribosomes during protein biosynthesis.</text>
</comment>
<comment type="subcellular location">
    <subcellularLocation>
        <location>Cytoplasm</location>
    </subcellularLocation>
</comment>
<comment type="alternative products">
    <event type="alternative splicing"/>
    <isoform>
        <id>Q8W4H7-1</id>
        <name>1</name>
        <sequence type="displayed"/>
    </isoform>
    <text>A number of isoforms are produced. According to EST sequences.</text>
</comment>
<comment type="miscellaneous">
    <text>There are four genes for EF-1-alpha in Arabidopsis thaliana. The sequence of genes 1, 2, and 3 are identical.</text>
</comment>
<comment type="similarity">
    <text evidence="4">Belongs to the TRAFAC class translation factor GTPase superfamily. Classic translation factor GTPase family. EF-Tu/EF-1A subfamily.</text>
</comment>
<comment type="sequence caution" evidence="4">
    <conflict type="erroneous gene model prediction">
        <sequence resource="EMBL-CDS" id="AAF79822"/>
    </conflict>
</comment>
<protein>
    <recommendedName>
        <fullName>Elongation factor 1-alpha 2</fullName>
        <shortName>EF-1-alpha 2</shortName>
    </recommendedName>
    <alternativeName>
        <fullName>eEF-1A2</fullName>
    </alternativeName>
</protein>
<reference key="1">
    <citation type="journal article" date="1990" name="Plant Mol. Biol.">
        <title>The four members of the gene family encoding the Arabidopsis thaliana translation elongation factor EF-1 alpha are actively transcribed.</title>
        <authorList>
            <person name="Liboz T."/>
            <person name="Bardet C."/>
            <person name="le van Thai A."/>
            <person name="Axelos M."/>
            <person name="Lescure B."/>
        </authorList>
    </citation>
    <scope>NUCLEOTIDE SEQUENCE [GENOMIC DNA]</scope>
    <source>
        <strain>cv. Columbia</strain>
    </source>
</reference>
<reference key="2">
    <citation type="submission" date="1996-07" db="EMBL/GenBank/DDBJ databases">
        <authorList>
            <person name="Tremousaygue D."/>
            <person name="Bardet C."/>
            <person name="Dabos P."/>
            <person name="Regad F."/>
            <person name="Pelese F."/>
            <person name="Lescure B."/>
        </authorList>
    </citation>
    <scope>NUCLEOTIDE SEQUENCE [GENOMIC DNA]</scope>
    <source>
        <strain>cv. Columbia</strain>
    </source>
</reference>
<reference key="3">
    <citation type="journal article" date="2000" name="Nature">
        <title>Sequence and analysis of chromosome 1 of the plant Arabidopsis thaliana.</title>
        <authorList>
            <person name="Theologis A."/>
            <person name="Ecker J.R."/>
            <person name="Palm C.J."/>
            <person name="Federspiel N.A."/>
            <person name="Kaul S."/>
            <person name="White O."/>
            <person name="Alonso J."/>
            <person name="Altafi H."/>
            <person name="Araujo R."/>
            <person name="Bowman C.L."/>
            <person name="Brooks S.Y."/>
            <person name="Buehler E."/>
            <person name="Chan A."/>
            <person name="Chao Q."/>
            <person name="Chen H."/>
            <person name="Cheuk R.F."/>
            <person name="Chin C.W."/>
            <person name="Chung M.K."/>
            <person name="Conn L."/>
            <person name="Conway A.B."/>
            <person name="Conway A.R."/>
            <person name="Creasy T.H."/>
            <person name="Dewar K."/>
            <person name="Dunn P."/>
            <person name="Etgu P."/>
            <person name="Feldblyum T.V."/>
            <person name="Feng J.-D."/>
            <person name="Fong B."/>
            <person name="Fujii C.Y."/>
            <person name="Gill J.E."/>
            <person name="Goldsmith A.D."/>
            <person name="Haas B."/>
            <person name="Hansen N.F."/>
            <person name="Hughes B."/>
            <person name="Huizar L."/>
            <person name="Hunter J.L."/>
            <person name="Jenkins J."/>
            <person name="Johnson-Hopson C."/>
            <person name="Khan S."/>
            <person name="Khaykin E."/>
            <person name="Kim C.J."/>
            <person name="Koo H.L."/>
            <person name="Kremenetskaia I."/>
            <person name="Kurtz D.B."/>
            <person name="Kwan A."/>
            <person name="Lam B."/>
            <person name="Langin-Hooper S."/>
            <person name="Lee A."/>
            <person name="Lee J.M."/>
            <person name="Lenz C.A."/>
            <person name="Li J.H."/>
            <person name="Li Y.-P."/>
            <person name="Lin X."/>
            <person name="Liu S.X."/>
            <person name="Liu Z.A."/>
            <person name="Luros J.S."/>
            <person name="Maiti R."/>
            <person name="Marziali A."/>
            <person name="Militscher J."/>
            <person name="Miranda M."/>
            <person name="Nguyen M."/>
            <person name="Nierman W.C."/>
            <person name="Osborne B.I."/>
            <person name="Pai G."/>
            <person name="Peterson J."/>
            <person name="Pham P.K."/>
            <person name="Rizzo M."/>
            <person name="Rooney T."/>
            <person name="Rowley D."/>
            <person name="Sakano H."/>
            <person name="Salzberg S.L."/>
            <person name="Schwartz J.R."/>
            <person name="Shinn P."/>
            <person name="Southwick A.M."/>
            <person name="Sun H."/>
            <person name="Tallon L.J."/>
            <person name="Tambunga G."/>
            <person name="Toriumi M.J."/>
            <person name="Town C.D."/>
            <person name="Utterback T."/>
            <person name="Van Aken S."/>
            <person name="Vaysberg M."/>
            <person name="Vysotskaia V.S."/>
            <person name="Walker M."/>
            <person name="Wu D."/>
            <person name="Yu G."/>
            <person name="Fraser C.M."/>
            <person name="Venter J.C."/>
            <person name="Davis R.W."/>
        </authorList>
    </citation>
    <scope>NUCLEOTIDE SEQUENCE [LARGE SCALE GENOMIC DNA]</scope>
    <source>
        <strain>cv. Columbia</strain>
    </source>
</reference>
<reference key="4">
    <citation type="journal article" date="2017" name="Plant J.">
        <title>Araport11: a complete reannotation of the Arabidopsis thaliana reference genome.</title>
        <authorList>
            <person name="Cheng C.Y."/>
            <person name="Krishnakumar V."/>
            <person name="Chan A.P."/>
            <person name="Thibaud-Nissen F."/>
            <person name="Schobel S."/>
            <person name="Town C.D."/>
        </authorList>
    </citation>
    <scope>GENOME REANNOTATION</scope>
    <source>
        <strain>cv. Columbia</strain>
    </source>
</reference>
<reference key="5">
    <citation type="journal article" date="2003" name="Science">
        <title>Empirical analysis of transcriptional activity in the Arabidopsis genome.</title>
        <authorList>
            <person name="Yamada K."/>
            <person name="Lim J."/>
            <person name="Dale J.M."/>
            <person name="Chen H."/>
            <person name="Shinn P."/>
            <person name="Palm C.J."/>
            <person name="Southwick A.M."/>
            <person name="Wu H.C."/>
            <person name="Kim C.J."/>
            <person name="Nguyen M."/>
            <person name="Pham P.K."/>
            <person name="Cheuk R.F."/>
            <person name="Karlin-Newmann G."/>
            <person name="Liu S.X."/>
            <person name="Lam B."/>
            <person name="Sakano H."/>
            <person name="Wu T."/>
            <person name="Yu G."/>
            <person name="Miranda M."/>
            <person name="Quach H.L."/>
            <person name="Tripp M."/>
            <person name="Chang C.H."/>
            <person name="Lee J.M."/>
            <person name="Toriumi M.J."/>
            <person name="Chan M.M."/>
            <person name="Tang C.C."/>
            <person name="Onodera C.S."/>
            <person name="Deng J.M."/>
            <person name="Akiyama K."/>
            <person name="Ansari Y."/>
            <person name="Arakawa T."/>
            <person name="Banh J."/>
            <person name="Banno F."/>
            <person name="Bowser L."/>
            <person name="Brooks S.Y."/>
            <person name="Carninci P."/>
            <person name="Chao Q."/>
            <person name="Choy N."/>
            <person name="Enju A."/>
            <person name="Goldsmith A.D."/>
            <person name="Gurjal M."/>
            <person name="Hansen N.F."/>
            <person name="Hayashizaki Y."/>
            <person name="Johnson-Hopson C."/>
            <person name="Hsuan V.W."/>
            <person name="Iida K."/>
            <person name="Karnes M."/>
            <person name="Khan S."/>
            <person name="Koesema E."/>
            <person name="Ishida J."/>
            <person name="Jiang P.X."/>
            <person name="Jones T."/>
            <person name="Kawai J."/>
            <person name="Kamiya A."/>
            <person name="Meyers C."/>
            <person name="Nakajima M."/>
            <person name="Narusaka M."/>
            <person name="Seki M."/>
            <person name="Sakurai T."/>
            <person name="Satou M."/>
            <person name="Tamse R."/>
            <person name="Vaysberg M."/>
            <person name="Wallender E.K."/>
            <person name="Wong C."/>
            <person name="Yamamura Y."/>
            <person name="Yuan S."/>
            <person name="Shinozaki K."/>
            <person name="Davis R.W."/>
            <person name="Theologis A."/>
            <person name="Ecker J.R."/>
        </authorList>
    </citation>
    <scope>NUCLEOTIDE SEQUENCE [LARGE SCALE MRNA]</scope>
    <source>
        <strain>cv. Columbia</strain>
    </source>
</reference>
<reference key="6">
    <citation type="journal article" date="2009" name="DNA Res.">
        <title>Analysis of multiple occurrences of alternative splicing events in Arabidopsis thaliana using novel sequenced full-length cDNAs.</title>
        <authorList>
            <person name="Iida K."/>
            <person name="Fukami-Kobayashi K."/>
            <person name="Toyoda A."/>
            <person name="Sakaki Y."/>
            <person name="Kobayashi M."/>
            <person name="Seki M."/>
            <person name="Shinozaki K."/>
        </authorList>
    </citation>
    <scope>NUCLEOTIDE SEQUENCE [LARGE SCALE MRNA]</scope>
    <source>
        <strain>cv. Columbia</strain>
    </source>
</reference>
<reference key="7">
    <citation type="journal article" date="2007" name="Mol. Cell. Proteomics">
        <title>Multidimensional protein identification technology (MudPIT) analysis of ubiquitinated proteins in plants.</title>
        <authorList>
            <person name="Maor R."/>
            <person name="Jones A."/>
            <person name="Nuehse T.S."/>
            <person name="Studholme D.J."/>
            <person name="Peck S.C."/>
            <person name="Shirasu K."/>
        </authorList>
    </citation>
    <scope>IDENTIFICATION BY MASS SPECTROMETRY [LARGE SCALE ANALYSIS]</scope>
    <source>
        <strain>cv. Landsberg erecta</strain>
    </source>
</reference>
<reference key="8">
    <citation type="journal article" date="2009" name="J. Proteomics">
        <title>Phosphoproteomic analysis of nuclei-enriched fractions from Arabidopsis thaliana.</title>
        <authorList>
            <person name="Jones A.M.E."/>
            <person name="MacLean D."/>
            <person name="Studholme D.J."/>
            <person name="Serna-Sanz A."/>
            <person name="Andreasson E."/>
            <person name="Rathjen J.P."/>
            <person name="Peck S.C."/>
        </authorList>
    </citation>
    <scope>IDENTIFICATION BY MASS SPECTROMETRY [LARGE SCALE ANALYSIS]</scope>
    <source>
        <strain>cv. Columbia</strain>
    </source>
</reference>
<reference key="9">
    <citation type="journal article" date="2009" name="Plant J.">
        <title>Tandem affinity purification and mass spectrometric analysis of ubiquitylated proteins in Arabidopsis.</title>
        <authorList>
            <person name="Saracco S.A."/>
            <person name="Hansson M."/>
            <person name="Scalf M."/>
            <person name="Walker J.M."/>
            <person name="Smith L.M."/>
            <person name="Vierstra R.D."/>
        </authorList>
    </citation>
    <scope>UBIQUITINATION [LARGE SCALE ANALYSIS] AT LYS-438 AND LYS-441</scope>
    <scope>IDENTIFICATION BY MASS SPECTROMETRY</scope>
</reference>
<accession>Q8W4H7</accession>
<accession>B9DGN1</accession>
<accession>P13905</accession>
<accession>Q8VZE8</accession>
<accession>Q94AD0</accession>
<accession>Q9ASU9</accession>
<accession>Q9LN13</accession>
<organism>
    <name type="scientific">Arabidopsis thaliana</name>
    <name type="common">Mouse-ear cress</name>
    <dbReference type="NCBI Taxonomy" id="3702"/>
    <lineage>
        <taxon>Eukaryota</taxon>
        <taxon>Viridiplantae</taxon>
        <taxon>Streptophyta</taxon>
        <taxon>Embryophyta</taxon>
        <taxon>Tracheophyta</taxon>
        <taxon>Spermatophyta</taxon>
        <taxon>Magnoliopsida</taxon>
        <taxon>eudicotyledons</taxon>
        <taxon>Gunneridae</taxon>
        <taxon>Pentapetalae</taxon>
        <taxon>rosids</taxon>
        <taxon>malvids</taxon>
        <taxon>Brassicales</taxon>
        <taxon>Brassicaceae</taxon>
        <taxon>Camelineae</taxon>
        <taxon>Arabidopsis</taxon>
    </lineage>
</organism>
<feature type="chain" id="PRO_0000415909" description="Elongation factor 1-alpha 2">
    <location>
        <begin position="1"/>
        <end position="449"/>
    </location>
</feature>
<feature type="domain" description="tr-type G">
    <location>
        <begin position="5"/>
        <end position="230"/>
    </location>
</feature>
<feature type="region of interest" description="G1" evidence="1">
    <location>
        <begin position="14"/>
        <end position="21"/>
    </location>
</feature>
<feature type="region of interest" description="G2" evidence="1">
    <location>
        <begin position="70"/>
        <end position="74"/>
    </location>
</feature>
<feature type="region of interest" description="G3" evidence="1">
    <location>
        <begin position="91"/>
        <end position="94"/>
    </location>
</feature>
<feature type="region of interest" description="G4" evidence="1">
    <location>
        <begin position="153"/>
        <end position="156"/>
    </location>
</feature>
<feature type="region of interest" description="G5" evidence="1">
    <location>
        <begin position="194"/>
        <end position="196"/>
    </location>
</feature>
<feature type="binding site" evidence="1">
    <location>
        <begin position="14"/>
        <end position="21"/>
    </location>
    <ligand>
        <name>GTP</name>
        <dbReference type="ChEBI" id="CHEBI:37565"/>
    </ligand>
</feature>
<feature type="binding site" evidence="1">
    <location>
        <begin position="91"/>
        <end position="95"/>
    </location>
    <ligand>
        <name>GTP</name>
        <dbReference type="ChEBI" id="CHEBI:37565"/>
    </ligand>
</feature>
<feature type="binding site" evidence="1">
    <location>
        <begin position="153"/>
        <end position="156"/>
    </location>
    <ligand>
        <name>GTP</name>
        <dbReference type="ChEBI" id="CHEBI:37565"/>
    </ligand>
</feature>
<feature type="modified residue" description="N6,N6-dimethyllysine" evidence="2">
    <location>
        <position position="55"/>
    </location>
</feature>
<feature type="modified residue" description="N6,N6,N6-trimethyllysine" evidence="2">
    <location>
        <position position="79"/>
    </location>
</feature>
<feature type="modified residue" description="N6,N6,N6-trimethyllysine" evidence="2">
    <location>
        <position position="187"/>
    </location>
</feature>
<feature type="modified residue" description="N6-methyllysine" evidence="2">
    <location>
        <position position="261"/>
    </location>
</feature>
<feature type="modified residue" description="N6,N6,N6-trimethyllysine" evidence="2">
    <location>
        <position position="306"/>
    </location>
</feature>
<feature type="modified residue" description="N6,N6,N6-trimethyllysine" evidence="2">
    <location>
        <position position="396"/>
    </location>
</feature>
<feature type="cross-link" description="Glycyl lysine isopeptide (Lys-Gly) (interchain with G-Cter in ubiquitin)" evidence="3">
    <location>
        <position position="438"/>
    </location>
</feature>
<feature type="cross-link" description="Glycyl lysine isopeptide (Lys-Gly) (interchain with G-Cter in ubiquitin)" evidence="3">
    <location>
        <position position="441"/>
    </location>
</feature>
<feature type="sequence conflict" description="In Ref. 5; AAL15385/AAK32834." evidence="4" ref="5">
    <original>V</original>
    <variation>L</variation>
    <location>
        <position position="38"/>
    </location>
</feature>
<feature type="sequence conflict" description="In Ref. 5; AAK82537." evidence="4" ref="5">
    <original>E</original>
    <variation>Q</variation>
    <location>
        <position position="43"/>
    </location>
</feature>
<feature type="sequence conflict" description="In Ref. 5; AAK82537." evidence="4" ref="5">
    <original>F</original>
    <variation>I</variation>
    <location>
        <position position="80"/>
    </location>
</feature>
<feature type="sequence conflict" description="In Ref. 5; AAK82537." evidence="4" ref="5">
    <original>V</original>
    <variation>G</variation>
    <location>
        <position position="89"/>
    </location>
</feature>
<feature type="sequence conflict" description="In Ref. 5; AAL57653." evidence="4" ref="5">
    <original>KM</original>
    <variation>NI</variation>
    <location>
        <begin position="154"/>
        <end position="155"/>
    </location>
</feature>
<feature type="sequence conflict" description="In Ref. 5; AAK82537." evidence="4" ref="5">
    <original>S</original>
    <variation>L</variation>
    <location>
        <position position="230"/>
    </location>
</feature>
<feature type="sequence conflict" description="In Ref. 6; BAH19898." evidence="4" ref="6">
    <original>K</original>
    <variation>M</variation>
    <location>
        <position position="391"/>
    </location>
</feature>
<feature type="sequence conflict" description="In Ref. 5; AAM47970/AAL32631." evidence="4" ref="5">
    <original>AVG</original>
    <variation>TVS</variation>
    <location>
        <begin position="422"/>
        <end position="424"/>
    </location>
</feature>
<proteinExistence type="evidence at protein level"/>
<dbReference type="EMBL" id="X16431">
    <property type="protein sequence ID" value="CAA34454.1"/>
    <property type="molecule type" value="Genomic_DNA"/>
</dbReference>
<dbReference type="EMBL" id="U63815">
    <property type="protein sequence ID" value="AAB07883.1"/>
    <property type="molecule type" value="Genomic_DNA"/>
</dbReference>
<dbReference type="EMBL" id="AC026875">
    <property type="protein sequence ID" value="AAF79822.1"/>
    <property type="status" value="ALT_SEQ"/>
    <property type="molecule type" value="Genomic_DNA"/>
</dbReference>
<dbReference type="EMBL" id="CP002684">
    <property type="protein sequence ID" value="AEE28213.1"/>
    <property type="molecule type" value="Genomic_DNA"/>
</dbReference>
<dbReference type="EMBL" id="AF361822">
    <property type="protein sequence ID" value="AAK32834.1"/>
    <property type="molecule type" value="mRNA"/>
</dbReference>
<dbReference type="EMBL" id="AY048275">
    <property type="protein sequence ID" value="AAK82537.1"/>
    <property type="molecule type" value="mRNA"/>
</dbReference>
<dbReference type="EMBL" id="AY059160">
    <property type="protein sequence ID" value="AAL15385.1"/>
    <property type="molecule type" value="mRNA"/>
</dbReference>
<dbReference type="EMBL" id="AY062553">
    <property type="protein sequence ID" value="AAL32631.1"/>
    <property type="molecule type" value="mRNA"/>
</dbReference>
<dbReference type="EMBL" id="AY065008">
    <property type="protein sequence ID" value="AAL57653.1"/>
    <property type="molecule type" value="mRNA"/>
</dbReference>
<dbReference type="EMBL" id="AY080660">
    <property type="protein sequence ID" value="AAL86336.1"/>
    <property type="molecule type" value="mRNA"/>
</dbReference>
<dbReference type="EMBL" id="AY114651">
    <property type="protein sequence ID" value="AAM47970.1"/>
    <property type="molecule type" value="mRNA"/>
</dbReference>
<dbReference type="EMBL" id="AY123029">
    <property type="protein sequence ID" value="AAM67562.1"/>
    <property type="molecule type" value="mRNA"/>
</dbReference>
<dbReference type="EMBL" id="BT003325">
    <property type="protein sequence ID" value="AAO29944.1"/>
    <property type="molecule type" value="mRNA"/>
</dbReference>
<dbReference type="EMBL" id="AK317216">
    <property type="protein sequence ID" value="BAH19898.1"/>
    <property type="molecule type" value="mRNA"/>
</dbReference>
<dbReference type="PIR" id="F86214">
    <property type="entry name" value="F86214"/>
</dbReference>
<dbReference type="PIR" id="S06724">
    <property type="entry name" value="S06724"/>
</dbReference>
<dbReference type="RefSeq" id="NP_001030993.1">
    <molecule id="Q8W4H7-1"/>
    <property type="nucleotide sequence ID" value="NM_001035916.3"/>
</dbReference>
<dbReference type="RefSeq" id="NP_001119464.1">
    <molecule id="Q8W4H7-1"/>
    <property type="nucleotide sequence ID" value="NM_001125992.1"/>
</dbReference>
<dbReference type="RefSeq" id="NP_001318848.1">
    <molecule id="Q8W4H7-1"/>
    <property type="nucleotide sequence ID" value="NM_001345413.1"/>
</dbReference>
<dbReference type="RefSeq" id="NP_001320767.1">
    <molecule id="Q8W4H7-1"/>
    <property type="nucleotide sequence ID" value="NM_001331743.1"/>
</dbReference>
<dbReference type="RefSeq" id="NP_001320768.1">
    <molecule id="Q8W4H7-1"/>
    <property type="nucleotide sequence ID" value="NM_001331742.1"/>
</dbReference>
<dbReference type="RefSeq" id="NP_200847.1">
    <molecule id="Q8W4H7-1"/>
    <property type="nucleotide sequence ID" value="NM_125432.4"/>
</dbReference>
<dbReference type="RefSeq" id="NP_563799.1">
    <molecule id="Q8W4H7-1"/>
    <property type="nucleotide sequence ID" value="NM_100666.4"/>
</dbReference>
<dbReference type="RefSeq" id="NP_563800.1">
    <molecule id="Q8W4H7-1"/>
    <property type="nucleotide sequence ID" value="NM_100667.4"/>
</dbReference>
<dbReference type="RefSeq" id="NP_563801.1">
    <molecule id="Q8W4H7-1"/>
    <property type="nucleotide sequence ID" value="NM_100668.3"/>
</dbReference>
<dbReference type="SMR" id="Q8W4H7"/>
<dbReference type="BioGRID" id="21405">
    <property type="interactions" value="3"/>
</dbReference>
<dbReference type="BioGRID" id="22548">
    <property type="interactions" value="10"/>
</dbReference>
<dbReference type="BioGRID" id="22549">
    <property type="interactions" value="3"/>
</dbReference>
<dbReference type="BioGRID" id="22550">
    <property type="interactions" value="2"/>
</dbReference>
<dbReference type="FunCoup" id="Q8W4H7">
    <property type="interactions" value="2398"/>
</dbReference>
<dbReference type="IntAct" id="Q8W4H7">
    <property type="interactions" value="2"/>
</dbReference>
<dbReference type="STRING" id="3702.Q8W4H7"/>
<dbReference type="iPTMnet" id="Q8W4H7"/>
<dbReference type="ProMEX" id="Q8W4H7"/>
<dbReference type="EnsemblPlants" id="AT1G07920.1">
    <molecule id="Q8W4H7-1"/>
    <property type="protein sequence ID" value="AT1G07920.1"/>
    <property type="gene ID" value="AT1G07920"/>
</dbReference>
<dbReference type="EnsemblPlants" id="AT1G07930.1">
    <molecule id="Q8W4H7-1"/>
    <property type="protein sequence ID" value="AT1G07930.1"/>
    <property type="gene ID" value="AT1G07930"/>
</dbReference>
<dbReference type="EnsemblPlants" id="AT1G07940.1">
    <molecule id="Q8W4H7-1"/>
    <property type="protein sequence ID" value="AT1G07940.1"/>
    <property type="gene ID" value="AT1G07940"/>
</dbReference>
<dbReference type="EnsemblPlants" id="AT1G07940.2">
    <molecule id="Q8W4H7-1"/>
    <property type="protein sequence ID" value="AT1G07940.2"/>
    <property type="gene ID" value="AT1G07940"/>
</dbReference>
<dbReference type="EnsemblPlants" id="AT1G07940.3">
    <molecule id="Q8W4H7-1"/>
    <property type="protein sequence ID" value="AT1G07940.3"/>
    <property type="gene ID" value="AT1G07940"/>
</dbReference>
<dbReference type="EnsemblPlants" id="AT1G07940.4">
    <molecule id="Q8W4H7-1"/>
    <property type="protein sequence ID" value="AT1G07940.4"/>
    <property type="gene ID" value="AT1G07940"/>
</dbReference>
<dbReference type="EnsemblPlants" id="AT5G60390.1">
    <molecule id="Q8W4H7-1"/>
    <property type="protein sequence ID" value="AT5G60390.1"/>
    <property type="gene ID" value="AT5G60390"/>
</dbReference>
<dbReference type="EnsemblPlants" id="AT5G60390.2">
    <molecule id="Q8W4H7-1"/>
    <property type="protein sequence ID" value="AT5G60390.2"/>
    <property type="gene ID" value="AT5G60390"/>
</dbReference>
<dbReference type="EnsemblPlants" id="AT5G60390.3">
    <molecule id="Q8W4H7-1"/>
    <property type="protein sequence ID" value="AT5G60390.3"/>
    <property type="gene ID" value="AT5G60390"/>
</dbReference>
<dbReference type="GeneID" id="837308"/>
<dbReference type="Gramene" id="AT1G07920.1">
    <molecule id="Q8W4H7-1"/>
    <property type="protein sequence ID" value="AT1G07920.1"/>
    <property type="gene ID" value="AT1G07920"/>
</dbReference>
<dbReference type="Gramene" id="AT1G07930.1">
    <molecule id="Q8W4H7-1"/>
    <property type="protein sequence ID" value="AT1G07930.1"/>
    <property type="gene ID" value="AT1G07930"/>
</dbReference>
<dbReference type="Gramene" id="AT1G07940.1">
    <molecule id="Q8W4H7-1"/>
    <property type="protein sequence ID" value="AT1G07940.1"/>
    <property type="gene ID" value="AT1G07940"/>
</dbReference>
<dbReference type="Gramene" id="AT1G07940.2">
    <molecule id="Q8W4H7-1"/>
    <property type="protein sequence ID" value="AT1G07940.2"/>
    <property type="gene ID" value="AT1G07940"/>
</dbReference>
<dbReference type="Gramene" id="AT1G07940.3">
    <molecule id="Q8W4H7-1"/>
    <property type="protein sequence ID" value="AT1G07940.3"/>
    <property type="gene ID" value="AT1G07940"/>
</dbReference>
<dbReference type="Gramene" id="AT1G07940.4">
    <molecule id="Q8W4H7-1"/>
    <property type="protein sequence ID" value="AT1G07940.4"/>
    <property type="gene ID" value="AT1G07940"/>
</dbReference>
<dbReference type="Gramene" id="AT5G60390.1">
    <molecule id="Q8W4H7-1"/>
    <property type="protein sequence ID" value="AT5G60390.1"/>
    <property type="gene ID" value="AT5G60390"/>
</dbReference>
<dbReference type="Gramene" id="AT5G60390.2">
    <molecule id="Q8W4H7-1"/>
    <property type="protein sequence ID" value="AT5G60390.2"/>
    <property type="gene ID" value="AT5G60390"/>
</dbReference>
<dbReference type="Gramene" id="AT5G60390.3">
    <molecule id="Q8W4H7-1"/>
    <property type="protein sequence ID" value="AT5G60390.3"/>
    <property type="gene ID" value="AT5G60390"/>
</dbReference>
<dbReference type="KEGG" id="ath:AT1G07920"/>
<dbReference type="KEGG" id="ath:AT1G07930"/>
<dbReference type="KEGG" id="ath:AT1G07940"/>
<dbReference type="KEGG" id="ath:AT5G60390"/>
<dbReference type="Araport" id="AT1G07930"/>
<dbReference type="TAIR" id="AT1G07930"/>
<dbReference type="HOGENOM" id="CLU_007265_3_5_1"/>
<dbReference type="InParanoid" id="Q8W4H7"/>
<dbReference type="OMA" id="KLCLHFE"/>
<dbReference type="OrthoDB" id="1040549at2759"/>
<dbReference type="PhylomeDB" id="Q8W4H7"/>
<dbReference type="BRENDA" id="3.6.5.3">
    <property type="organism ID" value="399"/>
</dbReference>
<dbReference type="CD-CODE" id="4299E36E">
    <property type="entry name" value="Nucleolus"/>
</dbReference>
<dbReference type="PRO" id="PR:Q8W4H7"/>
<dbReference type="Proteomes" id="UP000006548">
    <property type="component" value="Chromosome 1"/>
</dbReference>
<dbReference type="ExpressionAtlas" id="Q8W4H7">
    <property type="expression patterns" value="baseline and differential"/>
</dbReference>
<dbReference type="GO" id="GO:0005739">
    <property type="term" value="C:mitochondrion"/>
    <property type="evidence" value="ECO:0007005"/>
    <property type="project" value="TAIR"/>
</dbReference>
<dbReference type="GO" id="GO:0009506">
    <property type="term" value="C:plasmodesma"/>
    <property type="evidence" value="ECO:0007005"/>
    <property type="project" value="TAIR"/>
</dbReference>
<dbReference type="GO" id="GO:0005773">
    <property type="term" value="C:vacuole"/>
    <property type="evidence" value="ECO:0007005"/>
    <property type="project" value="TAIR"/>
</dbReference>
<dbReference type="GO" id="GO:0005525">
    <property type="term" value="F:GTP binding"/>
    <property type="evidence" value="ECO:0007669"/>
    <property type="project" value="UniProtKB-KW"/>
</dbReference>
<dbReference type="GO" id="GO:0003924">
    <property type="term" value="F:GTPase activity"/>
    <property type="evidence" value="ECO:0007669"/>
    <property type="project" value="InterPro"/>
</dbReference>
<dbReference type="GO" id="GO:0003729">
    <property type="term" value="F:mRNA binding"/>
    <property type="evidence" value="ECO:0000314"/>
    <property type="project" value="TAIR"/>
</dbReference>
<dbReference type="GO" id="GO:0003746">
    <property type="term" value="F:translation elongation factor activity"/>
    <property type="evidence" value="ECO:0007669"/>
    <property type="project" value="UniProtKB-KW"/>
</dbReference>
<dbReference type="CDD" id="cd01883">
    <property type="entry name" value="EF1_alpha"/>
    <property type="match status" value="1"/>
</dbReference>
<dbReference type="CDD" id="cd03693">
    <property type="entry name" value="EF1_alpha_II"/>
    <property type="match status" value="1"/>
</dbReference>
<dbReference type="CDD" id="cd03705">
    <property type="entry name" value="EF1_alpha_III"/>
    <property type="match status" value="1"/>
</dbReference>
<dbReference type="FunFam" id="2.40.30.10:FF:000003">
    <property type="entry name" value="Elongation factor 1-alpha"/>
    <property type="match status" value="1"/>
</dbReference>
<dbReference type="FunFam" id="2.40.30.10:FF:000005">
    <property type="entry name" value="Elongation factor 1-alpha"/>
    <property type="match status" value="1"/>
</dbReference>
<dbReference type="FunFam" id="3.40.50.300:FF:000255">
    <property type="entry name" value="Elongation factor 1-alpha"/>
    <property type="match status" value="1"/>
</dbReference>
<dbReference type="Gene3D" id="3.40.50.300">
    <property type="entry name" value="P-loop containing nucleotide triphosphate hydrolases"/>
    <property type="match status" value="1"/>
</dbReference>
<dbReference type="Gene3D" id="2.40.30.10">
    <property type="entry name" value="Translation factors"/>
    <property type="match status" value="2"/>
</dbReference>
<dbReference type="HAMAP" id="MF_00118_A">
    <property type="entry name" value="EF_Tu_A"/>
    <property type="match status" value="1"/>
</dbReference>
<dbReference type="InterPro" id="IPR004161">
    <property type="entry name" value="EFTu-like_2"/>
</dbReference>
<dbReference type="InterPro" id="IPR031157">
    <property type="entry name" value="G_TR_CS"/>
</dbReference>
<dbReference type="InterPro" id="IPR054696">
    <property type="entry name" value="GTP-eEF1A_C"/>
</dbReference>
<dbReference type="InterPro" id="IPR027417">
    <property type="entry name" value="P-loop_NTPase"/>
</dbReference>
<dbReference type="InterPro" id="IPR000795">
    <property type="entry name" value="T_Tr_GTP-bd_dom"/>
</dbReference>
<dbReference type="InterPro" id="IPR050100">
    <property type="entry name" value="TRAFAC_GTPase_members"/>
</dbReference>
<dbReference type="InterPro" id="IPR009000">
    <property type="entry name" value="Transl_B-barrel_sf"/>
</dbReference>
<dbReference type="InterPro" id="IPR009001">
    <property type="entry name" value="Transl_elong_EF1A/Init_IF2_C"/>
</dbReference>
<dbReference type="InterPro" id="IPR004539">
    <property type="entry name" value="Transl_elong_EF1A_euk/arc"/>
</dbReference>
<dbReference type="NCBIfam" id="TIGR00483">
    <property type="entry name" value="EF-1_alpha"/>
    <property type="match status" value="1"/>
</dbReference>
<dbReference type="NCBIfam" id="NF008969">
    <property type="entry name" value="PRK12317.1"/>
    <property type="match status" value="1"/>
</dbReference>
<dbReference type="PANTHER" id="PTHR23115">
    <property type="entry name" value="TRANSLATION FACTOR"/>
    <property type="match status" value="1"/>
</dbReference>
<dbReference type="Pfam" id="PF22594">
    <property type="entry name" value="GTP-eEF1A_C"/>
    <property type="match status" value="1"/>
</dbReference>
<dbReference type="Pfam" id="PF00009">
    <property type="entry name" value="GTP_EFTU"/>
    <property type="match status" value="1"/>
</dbReference>
<dbReference type="Pfam" id="PF03144">
    <property type="entry name" value="GTP_EFTU_D2"/>
    <property type="match status" value="1"/>
</dbReference>
<dbReference type="PRINTS" id="PR00315">
    <property type="entry name" value="ELONGATNFCT"/>
</dbReference>
<dbReference type="SUPFAM" id="SSF50465">
    <property type="entry name" value="EF-Tu/eEF-1alpha/eIF2-gamma C-terminal domain"/>
    <property type="match status" value="1"/>
</dbReference>
<dbReference type="SUPFAM" id="SSF52540">
    <property type="entry name" value="P-loop containing nucleoside triphosphate hydrolases"/>
    <property type="match status" value="1"/>
</dbReference>
<dbReference type="SUPFAM" id="SSF50447">
    <property type="entry name" value="Translation proteins"/>
    <property type="match status" value="1"/>
</dbReference>
<dbReference type="PROSITE" id="PS00301">
    <property type="entry name" value="G_TR_1"/>
    <property type="match status" value="1"/>
</dbReference>
<dbReference type="PROSITE" id="PS51722">
    <property type="entry name" value="G_TR_2"/>
    <property type="match status" value="1"/>
</dbReference>